<gene>
    <name evidence="1" type="primary">secA</name>
    <name type="ordered locus">TWT_130</name>
</gene>
<sequence length="847" mass="94928">MSVKLLERILRAGEGRTLKRLRNIAHTVNAIEDEYKGCTDGELRTFAFDLKVRHQNGESLDSILPEAFAMVREASSRTLGLRHFDVQIMGGAALHMGYIAEMFTGEGKTLVATLPAFLNSLSGNGVHIVTVNDYLAGYHSQQMGRVYKVLGLETGVILADQDPSTRAQQYRADITYGTNNEFGFDYLRDNMAWSCAERVQRGHNFVILDEVDSILIDEARTPLIISGSSSGEVSRWFVEFAGIARALTAGEDYDVDERKHTVGVLEPGIAKVEDLLGISNLYESVNTPLISFLNNSIKAKELFKRDRDYVVLDGEVMIVDEHTGRILSGRRYNEGLHQAIEAKEGVEIKAENQTLATVTLQNYFRLYKKISGMTGTAVTEASEFMSTYKLPVVSIPTNKPNIRKDHPDVVYKNEQIKFENLADHVRECYTRGQPVLIGTTSVEKSEYVSKLLSKRGVRHEVLNAKNHAKEARIVAEAGRLRAVTVATNMAGRGTDIILGGNPEVLTAVELRRKGLDPSKDPERYEQAWSSAFPKLHRRTREEAEKVIEAGGLMVIGTERHESRRIDNQLRGRSGRQGDPGESRFYLSLTDDLMRKFNPGAASALAARVPDDTAIESKLVSRAIRSAQAQVESLNAETRKNVLKYDDVLNRQRAAIYTDRSRILEGGDIADRVQAFLSDAIEEIINSHAVTAWDFDALWADLKTIYPVGISIEELTDEAGGMGRITPDFVMREILSDAKFAYEKRESEIGPESMRDLERKVVLSVIDRCWRDHLYEMEYLKEGIGLRAMAQRDPLVEYQKEGFDMFEAMMGRIREESIGYLFNIDAQVSSNSPSDARNRPIEHDDNAV</sequence>
<evidence type="ECO:0000255" key="1">
    <source>
        <dbReference type="HAMAP-Rule" id="MF_01382"/>
    </source>
</evidence>
<evidence type="ECO:0000256" key="2">
    <source>
        <dbReference type="SAM" id="MobiDB-lite"/>
    </source>
</evidence>
<feature type="chain" id="PRO_0000318482" description="Protein translocase subunit SecA">
    <location>
        <begin position="1"/>
        <end position="847"/>
    </location>
</feature>
<feature type="region of interest" description="Disordered" evidence="2">
    <location>
        <begin position="828"/>
        <end position="847"/>
    </location>
</feature>
<feature type="compositionally biased region" description="Basic and acidic residues" evidence="2">
    <location>
        <begin position="835"/>
        <end position="847"/>
    </location>
</feature>
<feature type="binding site" evidence="1">
    <location>
        <position position="87"/>
    </location>
    <ligand>
        <name>ATP</name>
        <dbReference type="ChEBI" id="CHEBI:30616"/>
    </ligand>
</feature>
<feature type="binding site" evidence="1">
    <location>
        <begin position="105"/>
        <end position="109"/>
    </location>
    <ligand>
        <name>ATP</name>
        <dbReference type="ChEBI" id="CHEBI:30616"/>
    </ligand>
</feature>
<feature type="binding site" evidence="1">
    <location>
        <position position="495"/>
    </location>
    <ligand>
        <name>ATP</name>
        <dbReference type="ChEBI" id="CHEBI:30616"/>
    </ligand>
</feature>
<accession>Q83N29</accession>
<name>SECA_TROWT</name>
<proteinExistence type="inferred from homology"/>
<comment type="function">
    <text evidence="1">Part of the Sec protein translocase complex. Interacts with the SecYEG preprotein conducting channel. Has a central role in coupling the hydrolysis of ATP to the transfer of proteins into and across the cell membrane, serving as an ATP-driven molecular motor driving the stepwise translocation of polypeptide chains across the membrane.</text>
</comment>
<comment type="catalytic activity">
    <reaction evidence="1">
        <text>ATP + H2O + cellular proteinSide 1 = ADP + phosphate + cellular proteinSide 2.</text>
        <dbReference type="EC" id="7.4.2.8"/>
    </reaction>
</comment>
<comment type="subunit">
    <text evidence="1">Monomer and homodimer. Part of the essential Sec protein translocation apparatus which comprises SecA, SecYEG and auxiliary proteins SecDF. Other proteins may also be involved.</text>
</comment>
<comment type="subcellular location">
    <subcellularLocation>
        <location evidence="1">Cell membrane</location>
        <topology evidence="1">Peripheral membrane protein</topology>
        <orientation evidence="1">Cytoplasmic side</orientation>
    </subcellularLocation>
    <subcellularLocation>
        <location evidence="1">Cytoplasm</location>
    </subcellularLocation>
    <text evidence="1">Distribution is 50-50.</text>
</comment>
<comment type="similarity">
    <text evidence="1">Belongs to the SecA family.</text>
</comment>
<organism>
    <name type="scientific">Tropheryma whipplei (strain Twist)</name>
    <name type="common">Whipple's bacillus</name>
    <dbReference type="NCBI Taxonomy" id="203267"/>
    <lineage>
        <taxon>Bacteria</taxon>
        <taxon>Bacillati</taxon>
        <taxon>Actinomycetota</taxon>
        <taxon>Actinomycetes</taxon>
        <taxon>Micrococcales</taxon>
        <taxon>Tropherymataceae</taxon>
        <taxon>Tropheryma</taxon>
    </lineage>
</organism>
<protein>
    <recommendedName>
        <fullName evidence="1">Protein translocase subunit SecA</fullName>
        <ecNumber evidence="1">7.4.2.8</ecNumber>
    </recommendedName>
</protein>
<keyword id="KW-0067">ATP-binding</keyword>
<keyword id="KW-1003">Cell membrane</keyword>
<keyword id="KW-0963">Cytoplasm</keyword>
<keyword id="KW-0472">Membrane</keyword>
<keyword id="KW-0547">Nucleotide-binding</keyword>
<keyword id="KW-0653">Protein transport</keyword>
<keyword id="KW-1185">Reference proteome</keyword>
<keyword id="KW-1278">Translocase</keyword>
<keyword id="KW-0811">Translocation</keyword>
<keyword id="KW-0813">Transport</keyword>
<reference key="1">
    <citation type="journal article" date="2003" name="Genome Res.">
        <title>Tropheryma whipplei twist: a human pathogenic Actinobacteria with a reduced genome.</title>
        <authorList>
            <person name="Raoult D."/>
            <person name="Ogata H."/>
            <person name="Audic S."/>
            <person name="Robert C."/>
            <person name="Suhre K."/>
            <person name="Drancourt M."/>
            <person name="Claverie J.-M."/>
        </authorList>
    </citation>
    <scope>NUCLEOTIDE SEQUENCE [LARGE SCALE GENOMIC DNA]</scope>
    <source>
        <strain>Twist</strain>
    </source>
</reference>
<dbReference type="EC" id="7.4.2.8" evidence="1"/>
<dbReference type="EMBL" id="AE014184">
    <property type="protein sequence ID" value="AAO44227.1"/>
    <property type="molecule type" value="Genomic_DNA"/>
</dbReference>
<dbReference type="RefSeq" id="WP_011096100.1">
    <property type="nucleotide sequence ID" value="NC_004572.3"/>
</dbReference>
<dbReference type="SMR" id="Q83N29"/>
<dbReference type="STRING" id="203267.TWT_130"/>
<dbReference type="GeneID" id="67387911"/>
<dbReference type="KEGG" id="twh:TWT_130"/>
<dbReference type="eggNOG" id="COG0653">
    <property type="taxonomic scope" value="Bacteria"/>
</dbReference>
<dbReference type="HOGENOM" id="CLU_005314_3_0_11"/>
<dbReference type="OrthoDB" id="9805579at2"/>
<dbReference type="Proteomes" id="UP000002200">
    <property type="component" value="Chromosome"/>
</dbReference>
<dbReference type="GO" id="GO:0031522">
    <property type="term" value="C:cell envelope Sec protein transport complex"/>
    <property type="evidence" value="ECO:0007669"/>
    <property type="project" value="TreeGrafter"/>
</dbReference>
<dbReference type="GO" id="GO:0005829">
    <property type="term" value="C:cytosol"/>
    <property type="evidence" value="ECO:0007669"/>
    <property type="project" value="TreeGrafter"/>
</dbReference>
<dbReference type="GO" id="GO:0005886">
    <property type="term" value="C:plasma membrane"/>
    <property type="evidence" value="ECO:0007669"/>
    <property type="project" value="UniProtKB-SubCell"/>
</dbReference>
<dbReference type="GO" id="GO:0005524">
    <property type="term" value="F:ATP binding"/>
    <property type="evidence" value="ECO:0007669"/>
    <property type="project" value="UniProtKB-UniRule"/>
</dbReference>
<dbReference type="GO" id="GO:0008564">
    <property type="term" value="F:protein-exporting ATPase activity"/>
    <property type="evidence" value="ECO:0007669"/>
    <property type="project" value="UniProtKB-EC"/>
</dbReference>
<dbReference type="GO" id="GO:0065002">
    <property type="term" value="P:intracellular protein transmembrane transport"/>
    <property type="evidence" value="ECO:0007669"/>
    <property type="project" value="UniProtKB-UniRule"/>
</dbReference>
<dbReference type="GO" id="GO:0017038">
    <property type="term" value="P:protein import"/>
    <property type="evidence" value="ECO:0007669"/>
    <property type="project" value="InterPro"/>
</dbReference>
<dbReference type="GO" id="GO:0006605">
    <property type="term" value="P:protein targeting"/>
    <property type="evidence" value="ECO:0007669"/>
    <property type="project" value="UniProtKB-UniRule"/>
</dbReference>
<dbReference type="GO" id="GO:0043952">
    <property type="term" value="P:protein transport by the Sec complex"/>
    <property type="evidence" value="ECO:0007669"/>
    <property type="project" value="TreeGrafter"/>
</dbReference>
<dbReference type="CDD" id="cd17928">
    <property type="entry name" value="DEXDc_SecA"/>
    <property type="match status" value="1"/>
</dbReference>
<dbReference type="CDD" id="cd18803">
    <property type="entry name" value="SF2_C_secA"/>
    <property type="match status" value="1"/>
</dbReference>
<dbReference type="FunFam" id="1.10.3060.10:FF:000002">
    <property type="entry name" value="Preprotein translocase subunit SecA"/>
    <property type="match status" value="1"/>
</dbReference>
<dbReference type="FunFam" id="3.40.50.300:FF:000113">
    <property type="entry name" value="Preprotein translocase subunit SecA"/>
    <property type="match status" value="1"/>
</dbReference>
<dbReference type="FunFam" id="3.90.1440.10:FF:000002">
    <property type="entry name" value="Protein translocase subunit SecA"/>
    <property type="match status" value="1"/>
</dbReference>
<dbReference type="Gene3D" id="1.10.3060.10">
    <property type="entry name" value="Helical scaffold and wing domains of SecA"/>
    <property type="match status" value="1"/>
</dbReference>
<dbReference type="Gene3D" id="3.40.50.300">
    <property type="entry name" value="P-loop containing nucleotide triphosphate hydrolases"/>
    <property type="match status" value="2"/>
</dbReference>
<dbReference type="Gene3D" id="3.90.1440.10">
    <property type="entry name" value="SecA, preprotein cross-linking domain"/>
    <property type="match status" value="1"/>
</dbReference>
<dbReference type="HAMAP" id="MF_01382">
    <property type="entry name" value="SecA"/>
    <property type="match status" value="1"/>
</dbReference>
<dbReference type="InterPro" id="IPR014001">
    <property type="entry name" value="Helicase_ATP-bd"/>
</dbReference>
<dbReference type="InterPro" id="IPR027417">
    <property type="entry name" value="P-loop_NTPase"/>
</dbReference>
<dbReference type="InterPro" id="IPR000185">
    <property type="entry name" value="SecA"/>
</dbReference>
<dbReference type="InterPro" id="IPR020937">
    <property type="entry name" value="SecA_CS"/>
</dbReference>
<dbReference type="InterPro" id="IPR011115">
    <property type="entry name" value="SecA_DEAD"/>
</dbReference>
<dbReference type="InterPro" id="IPR014018">
    <property type="entry name" value="SecA_motor_DEAD"/>
</dbReference>
<dbReference type="InterPro" id="IPR011130">
    <property type="entry name" value="SecA_preprotein_X-link_dom"/>
</dbReference>
<dbReference type="InterPro" id="IPR044722">
    <property type="entry name" value="SecA_SF2_C"/>
</dbReference>
<dbReference type="InterPro" id="IPR011116">
    <property type="entry name" value="SecA_Wing/Scaffold"/>
</dbReference>
<dbReference type="InterPro" id="IPR036266">
    <property type="entry name" value="SecA_Wing/Scaffold_sf"/>
</dbReference>
<dbReference type="InterPro" id="IPR036670">
    <property type="entry name" value="SecA_X-link_sf"/>
</dbReference>
<dbReference type="NCBIfam" id="NF009538">
    <property type="entry name" value="PRK12904.1"/>
    <property type="match status" value="1"/>
</dbReference>
<dbReference type="NCBIfam" id="TIGR00963">
    <property type="entry name" value="secA"/>
    <property type="match status" value="1"/>
</dbReference>
<dbReference type="PANTHER" id="PTHR30612:SF0">
    <property type="entry name" value="CHLOROPLAST PROTEIN-TRANSPORTING ATPASE"/>
    <property type="match status" value="1"/>
</dbReference>
<dbReference type="PANTHER" id="PTHR30612">
    <property type="entry name" value="SECA INNER MEMBRANE COMPONENT OF SEC PROTEIN SECRETION SYSTEM"/>
    <property type="match status" value="1"/>
</dbReference>
<dbReference type="Pfam" id="PF21090">
    <property type="entry name" value="P-loop_SecA"/>
    <property type="match status" value="1"/>
</dbReference>
<dbReference type="Pfam" id="PF07517">
    <property type="entry name" value="SecA_DEAD"/>
    <property type="match status" value="1"/>
</dbReference>
<dbReference type="Pfam" id="PF01043">
    <property type="entry name" value="SecA_PP_bind"/>
    <property type="match status" value="1"/>
</dbReference>
<dbReference type="Pfam" id="PF07516">
    <property type="entry name" value="SecA_SW"/>
    <property type="match status" value="1"/>
</dbReference>
<dbReference type="PRINTS" id="PR00906">
    <property type="entry name" value="SECA"/>
</dbReference>
<dbReference type="SMART" id="SM00957">
    <property type="entry name" value="SecA_DEAD"/>
    <property type="match status" value="1"/>
</dbReference>
<dbReference type="SMART" id="SM00958">
    <property type="entry name" value="SecA_PP_bind"/>
    <property type="match status" value="1"/>
</dbReference>
<dbReference type="SUPFAM" id="SSF81886">
    <property type="entry name" value="Helical scaffold and wing domains of SecA"/>
    <property type="match status" value="1"/>
</dbReference>
<dbReference type="SUPFAM" id="SSF52540">
    <property type="entry name" value="P-loop containing nucleoside triphosphate hydrolases"/>
    <property type="match status" value="2"/>
</dbReference>
<dbReference type="SUPFAM" id="SSF81767">
    <property type="entry name" value="Pre-protein crosslinking domain of SecA"/>
    <property type="match status" value="1"/>
</dbReference>
<dbReference type="PROSITE" id="PS01312">
    <property type="entry name" value="SECA"/>
    <property type="match status" value="1"/>
</dbReference>
<dbReference type="PROSITE" id="PS51196">
    <property type="entry name" value="SECA_MOTOR_DEAD"/>
    <property type="match status" value="1"/>
</dbReference>